<comment type="function">
    <text evidence="1 2 5">DNA-binding transcriptional factor that plays a role in a broad range of cellular and developmental processes such as eye, bones, cardiovascular, kidney and skin development. Acts either as a transcriptional activator or repressor. Binds to the consensus binding site 5'-[G/C][A/T]AAA[T/C]AA[A/C]-3' in promoter of target genes. Upon DNA-binding, promotes DNA bending. Required for cell viability and resistance to oxidative stress in the eye. Promotes cell growth inhibition by stopping the cell cycle in the G1 phase through TGFB1-mediated signals. Involved in epithelial-mesenchymal transition (EMT) induction by increasing cell proliferation, migration and invasion. Involved in chemokine-induced endothelial cell migration. Plays a role in epidermal keratinocyte terminal differentiation. Essential developmental transcriptional factor required for mesoderm-derived tissues formation, such as the somites, skin, bone and cartilage. Plays a role in the development and maintenance of mesenchymal niches for haematopoietic stem and progenitor cells (HSPC). Plays a role in corneal transparency by preventing both blood vessel and lymphatic vessel growth during embryonic development in a VEGF-dependent manner (By similarity). Plays a role at the gastrula stage for expression of several mesodermal and endodermal genes (PubMed:17705306). At the late neurula stage, regulates expression of adhesion genes to maintain cell adhesion in the mesodermal germ layer (PubMed:17705306).</text>
</comment>
<comment type="subunit">
    <text evidence="9">Monomer.</text>
</comment>
<comment type="subcellular location">
    <subcellularLocation>
        <location evidence="2">Nucleus</location>
    </subcellularLocation>
</comment>
<comment type="tissue specificity">
    <text evidence="5 6">In gastrulae, expressed in ventral and lateral but not dorsal mesoderm. In neurulae, expressed in the posterior mesoderm except for the dorsal midline, and also at the lateral border of the neural plate and within anterior neuroectoderm. From tailbud stages, expressed in the pronephros, heart, neural crest cells surrounding the eye, in the mandibular, hyoid and branchial arches, and within the tail.</text>
</comment>
<comment type="developmental stage">
    <text evidence="6">Expressed from late blastula/early gastrula stage throughout embryogenesis.</text>
</comment>
<comment type="induction">
    <text evidence="5">By vegt, acting via nodal signaling.</text>
</comment>
<comment type="disruption phenotype">
    <text evidence="5">Embryos gastrulate and neurulate, but at the tailbud stage show stunted growth and loss of cells at the blastopore. Embryos continue to develop but display shortened axes and abnormal gut and heart development by the swimming tadpole stage.</text>
</comment>
<dbReference type="EMBL" id="AF116844">
    <property type="protein sequence ID" value="AAC99469.1"/>
    <property type="molecule type" value="mRNA"/>
</dbReference>
<dbReference type="EMBL" id="AJ242675">
    <property type="protein sequence ID" value="CAB44727.1"/>
    <property type="molecule type" value="mRNA"/>
</dbReference>
<dbReference type="EMBL" id="BC169731">
    <property type="protein sequence ID" value="AAI69731.1"/>
    <property type="molecule type" value="mRNA"/>
</dbReference>
<dbReference type="EMBL" id="BC169733">
    <property type="protein sequence ID" value="AAI69733.1"/>
    <property type="molecule type" value="mRNA"/>
</dbReference>
<dbReference type="EMBL" id="BC170199">
    <property type="protein sequence ID" value="AAI70199.1"/>
    <property type="molecule type" value="mRNA"/>
</dbReference>
<dbReference type="EMBL" id="BC170201">
    <property type="protein sequence ID" value="AAI70201.1"/>
    <property type="molecule type" value="mRNA"/>
</dbReference>
<dbReference type="RefSeq" id="NP_001080937.1">
    <property type="nucleotide sequence ID" value="NM_001087468.1"/>
</dbReference>
<dbReference type="RefSeq" id="NP_001081683.1">
    <property type="nucleotide sequence ID" value="NM_001088214.1"/>
</dbReference>
<dbReference type="SMR" id="Q9PVZ3"/>
<dbReference type="GeneID" id="397996"/>
<dbReference type="KEGG" id="xla:397996"/>
<dbReference type="CTD" id="397996"/>
<dbReference type="OMA" id="THSAGVY"/>
<dbReference type="OrthoDB" id="5954824at2759"/>
<dbReference type="Proteomes" id="UP000186698">
    <property type="component" value="Chromosome 6S"/>
</dbReference>
<dbReference type="Bgee" id="397996">
    <property type="expression patterns" value="Expressed in internal ear and 10 other cell types or tissues"/>
</dbReference>
<dbReference type="GO" id="GO:0005634">
    <property type="term" value="C:nucleus"/>
    <property type="evidence" value="ECO:0000250"/>
    <property type="project" value="UniProtKB"/>
</dbReference>
<dbReference type="GO" id="GO:0003677">
    <property type="term" value="F:DNA binding"/>
    <property type="evidence" value="ECO:0000250"/>
    <property type="project" value="UniProtKB"/>
</dbReference>
<dbReference type="GO" id="GO:0003700">
    <property type="term" value="F:DNA-binding transcription factor activity"/>
    <property type="evidence" value="ECO:0000250"/>
    <property type="project" value="UniProtKB"/>
</dbReference>
<dbReference type="GO" id="GO:0000981">
    <property type="term" value="F:DNA-binding transcription factor activity, RNA polymerase II-specific"/>
    <property type="evidence" value="ECO:0000318"/>
    <property type="project" value="GO_Central"/>
</dbReference>
<dbReference type="GO" id="GO:0000978">
    <property type="term" value="F:RNA polymerase II cis-regulatory region sequence-specific DNA binding"/>
    <property type="evidence" value="ECO:0000318"/>
    <property type="project" value="GO_Central"/>
</dbReference>
<dbReference type="GO" id="GO:0000976">
    <property type="term" value="F:transcription cis-regulatory region binding"/>
    <property type="evidence" value="ECO:0000250"/>
    <property type="project" value="UniProtKB"/>
</dbReference>
<dbReference type="GO" id="GO:0009653">
    <property type="term" value="P:anatomical structure morphogenesis"/>
    <property type="evidence" value="ECO:0000318"/>
    <property type="project" value="GO_Central"/>
</dbReference>
<dbReference type="GO" id="GO:0007155">
    <property type="term" value="P:cell adhesion"/>
    <property type="evidence" value="ECO:0000315"/>
    <property type="project" value="UniProtKB"/>
</dbReference>
<dbReference type="GO" id="GO:0030154">
    <property type="term" value="P:cell differentiation"/>
    <property type="evidence" value="ECO:0000318"/>
    <property type="project" value="GO_Central"/>
</dbReference>
<dbReference type="GO" id="GO:1990869">
    <property type="term" value="P:cellular response to chemokine"/>
    <property type="evidence" value="ECO:0000250"/>
    <property type="project" value="UniProtKB"/>
</dbReference>
<dbReference type="GO" id="GO:0070098">
    <property type="term" value="P:chemokine-mediated signaling pathway"/>
    <property type="evidence" value="ECO:0000250"/>
    <property type="project" value="UniProtKB"/>
</dbReference>
<dbReference type="GO" id="GO:0006351">
    <property type="term" value="P:DNA-templated transcription"/>
    <property type="evidence" value="ECO:0000315"/>
    <property type="project" value="UniProtKB"/>
</dbReference>
<dbReference type="GO" id="GO:0007498">
    <property type="term" value="P:mesoderm development"/>
    <property type="evidence" value="ECO:0000315"/>
    <property type="project" value="UniProtKB"/>
</dbReference>
<dbReference type="GO" id="GO:0045944">
    <property type="term" value="P:positive regulation of transcription by RNA polymerase II"/>
    <property type="evidence" value="ECO:0000250"/>
    <property type="project" value="UniProtKB"/>
</dbReference>
<dbReference type="GO" id="GO:0048793">
    <property type="term" value="P:pronephros development"/>
    <property type="evidence" value="ECO:0000270"/>
    <property type="project" value="UniProtKB"/>
</dbReference>
<dbReference type="GO" id="GO:0006355">
    <property type="term" value="P:regulation of DNA-templated transcription"/>
    <property type="evidence" value="ECO:0000315"/>
    <property type="project" value="UniProtKB"/>
</dbReference>
<dbReference type="GO" id="GO:0006357">
    <property type="term" value="P:regulation of transcription by RNA polymerase II"/>
    <property type="evidence" value="ECO:0000318"/>
    <property type="project" value="GO_Central"/>
</dbReference>
<dbReference type="CDD" id="cd20044">
    <property type="entry name" value="FH_FOXC1"/>
    <property type="match status" value="1"/>
</dbReference>
<dbReference type="FunFam" id="1.10.10.10:FF:000016">
    <property type="entry name" value="Forkhead box protein I1"/>
    <property type="match status" value="1"/>
</dbReference>
<dbReference type="Gene3D" id="1.10.10.10">
    <property type="entry name" value="Winged helix-like DNA-binding domain superfamily/Winged helix DNA-binding domain"/>
    <property type="match status" value="1"/>
</dbReference>
<dbReference type="InterPro" id="IPR001766">
    <property type="entry name" value="Fork_head_dom"/>
</dbReference>
<dbReference type="InterPro" id="IPR050211">
    <property type="entry name" value="FOX_domain-containing"/>
</dbReference>
<dbReference type="InterPro" id="IPR047391">
    <property type="entry name" value="FOXC1/C2-like_FH"/>
</dbReference>
<dbReference type="InterPro" id="IPR018122">
    <property type="entry name" value="TF_fork_head_CS_1"/>
</dbReference>
<dbReference type="InterPro" id="IPR030456">
    <property type="entry name" value="TF_fork_head_CS_2"/>
</dbReference>
<dbReference type="InterPro" id="IPR036388">
    <property type="entry name" value="WH-like_DNA-bd_sf"/>
</dbReference>
<dbReference type="InterPro" id="IPR036390">
    <property type="entry name" value="WH_DNA-bd_sf"/>
</dbReference>
<dbReference type="PANTHER" id="PTHR11829">
    <property type="entry name" value="FORKHEAD BOX PROTEIN"/>
    <property type="match status" value="1"/>
</dbReference>
<dbReference type="PANTHER" id="PTHR11829:SF68">
    <property type="entry name" value="FORKHEAD BOX PROTEIN C1"/>
    <property type="match status" value="1"/>
</dbReference>
<dbReference type="Pfam" id="PF00250">
    <property type="entry name" value="Forkhead"/>
    <property type="match status" value="1"/>
</dbReference>
<dbReference type="PRINTS" id="PR00053">
    <property type="entry name" value="FORKHEAD"/>
</dbReference>
<dbReference type="SMART" id="SM00339">
    <property type="entry name" value="FH"/>
    <property type="match status" value="1"/>
</dbReference>
<dbReference type="SUPFAM" id="SSF46785">
    <property type="entry name" value="Winged helix' DNA-binding domain"/>
    <property type="match status" value="1"/>
</dbReference>
<dbReference type="PROSITE" id="PS00657">
    <property type="entry name" value="FORK_HEAD_1"/>
    <property type="match status" value="1"/>
</dbReference>
<dbReference type="PROSITE" id="PS00658">
    <property type="entry name" value="FORK_HEAD_2"/>
    <property type="match status" value="1"/>
</dbReference>
<dbReference type="PROSITE" id="PS50039">
    <property type="entry name" value="FORK_HEAD_3"/>
    <property type="match status" value="1"/>
</dbReference>
<gene>
    <name type="primary">foxc1-a</name>
    <name type="synonym">foxc1</name>
</gene>
<reference evidence="9 10" key="1">
    <citation type="journal article" date="1998" name="Mech. Dev.">
        <title>Expression pattern of the winged helix factor XFD-11 during Xenopus embryogenesis.</title>
        <authorList>
            <person name="Koester M."/>
            <person name="Dillinger K."/>
            <person name="Knoechel W."/>
        </authorList>
    </citation>
    <scope>NUCLEOTIDE SEQUENCE [MRNA]</scope>
    <scope>TISSUE SPECIFICITY</scope>
    <scope>DEVELOPMENTAL STAGE</scope>
    <source>
        <tissue evidence="6">Gastrula</tissue>
    </source>
</reference>
<reference evidence="12" key="2">
    <citation type="submission" date="1999-06" db="EMBL/GenBank/DDBJ databases">
        <authorList>
            <person name="Knoechel W."/>
        </authorList>
    </citation>
    <scope>NUCLEOTIDE SEQUENCE [MRNA]</scope>
</reference>
<reference evidence="12" key="3">
    <citation type="submission" date="2008-11" db="EMBL/GenBank/DDBJ databases">
        <authorList>
            <consortium name="NIH - Xenopus Gene Collection (XGC) project"/>
        </authorList>
    </citation>
    <scope>NUCLEOTIDE SEQUENCE [LARGE SCALE MRNA]</scope>
    <source>
        <tissue evidence="11">Gastrula</tissue>
    </source>
</reference>
<reference evidence="9" key="4">
    <citation type="journal article" date="2007" name="Dev. Dyn.">
        <title>The role of FoxC1 in early Xenopus development.</title>
        <authorList>
            <person name="Cha J.Y."/>
            <person name="Birsoy B."/>
            <person name="Kofron M."/>
            <person name="Mahoney E."/>
            <person name="Lang S."/>
            <person name="Wylie C."/>
            <person name="Heasman J."/>
        </authorList>
    </citation>
    <scope>FUNCTION</scope>
    <scope>TISSUE SPECIFICITY</scope>
    <scope>INDUCTION</scope>
    <scope>DISRUPTION PHENOTYPE</scope>
</reference>
<reference evidence="9" key="5">
    <citation type="journal article" date="2005" name="Gene">
        <title>Of fox and frogs: fox (fork head/winged helix) transcription factors in Xenopus development.</title>
        <authorList>
            <person name="Pohl B.S."/>
            <person name="Knoechel W."/>
        </authorList>
    </citation>
    <scope>REVIEW</scope>
</reference>
<organism>
    <name type="scientific">Xenopus laevis</name>
    <name type="common">African clawed frog</name>
    <dbReference type="NCBI Taxonomy" id="8355"/>
    <lineage>
        <taxon>Eukaryota</taxon>
        <taxon>Metazoa</taxon>
        <taxon>Chordata</taxon>
        <taxon>Craniata</taxon>
        <taxon>Vertebrata</taxon>
        <taxon>Euteleostomi</taxon>
        <taxon>Amphibia</taxon>
        <taxon>Batrachia</taxon>
        <taxon>Anura</taxon>
        <taxon>Pipoidea</taxon>
        <taxon>Pipidae</taxon>
        <taxon>Xenopodinae</taxon>
        <taxon>Xenopus</taxon>
        <taxon>Xenopus</taxon>
    </lineage>
</organism>
<evidence type="ECO:0000250" key="1">
    <source>
        <dbReference type="UniProtKB" id="Q12948"/>
    </source>
</evidence>
<evidence type="ECO:0000250" key="2">
    <source>
        <dbReference type="UniProtKB" id="Q61572"/>
    </source>
</evidence>
<evidence type="ECO:0000255" key="3">
    <source>
        <dbReference type="PROSITE-ProRule" id="PRU00089"/>
    </source>
</evidence>
<evidence type="ECO:0000256" key="4">
    <source>
        <dbReference type="SAM" id="MobiDB-lite"/>
    </source>
</evidence>
<evidence type="ECO:0000269" key="5">
    <source>
    </source>
</evidence>
<evidence type="ECO:0000269" key="6">
    <source>
    </source>
</evidence>
<evidence type="ECO:0000303" key="7">
    <source>
    </source>
</evidence>
<evidence type="ECO:0000303" key="8">
    <source>
    </source>
</evidence>
<evidence type="ECO:0000305" key="9"/>
<evidence type="ECO:0000312" key="10">
    <source>
        <dbReference type="EMBL" id="AAC99469.1"/>
    </source>
</evidence>
<evidence type="ECO:0000312" key="11">
    <source>
        <dbReference type="EMBL" id="AAI69731.1"/>
    </source>
</evidence>
<evidence type="ECO:0000312" key="12">
    <source>
        <dbReference type="EMBL" id="CAB44727.1"/>
    </source>
</evidence>
<proteinExistence type="evidence at transcript level"/>
<keyword id="KW-0217">Developmental protein</keyword>
<keyword id="KW-0238">DNA-binding</keyword>
<keyword id="KW-0539">Nucleus</keyword>
<keyword id="KW-1185">Reference proteome</keyword>
<keyword id="KW-0804">Transcription</keyword>
<keyword id="KW-0805">Transcription regulation</keyword>
<sequence length="492" mass="53674">MQARYSVSSPNSLGVVPYLSGEQSYYRAAAAAAAAGGGYTGMAAPMSMYSHPAHEQYQAGMARAYGPYTPQPQPKDMVKPPYSYIALITMAIQNAPDKKITLNGIYQFIMERFPFYRDNKQGWQNSIRHNLSLNECFVKVPRDDKKPGKGSYWTLDPDSYNMFENGSFLRRRRRFKKKDVSKDATKEDKERLLKEHHGSQSAAAQQQRQQQQSQAQAEQDSNSQPVRIQDIKTENGTSSPPQSMSPALSAVPKIESPDSSSSMSSGSPHSIPSNRSMSLEAAESHHPHHQQHSQGFSVDNIMTSLRGSPQGSAELPSPLISSSRTGIAPSLSLSYSPGQGSIYSSPCSQGTSSGGGAGTYHCNMQAMSLYSGDRSGHLTPANTPAATTVEETLPDYSISTTSAQSHGNQEHPHQGRLPSWYLNQTGELGHLAGATYPGQQQNFHSVREMFESQRLALNSSPVNGNSSCQMSFPPSQSLYRTSGAFVYDCSKF</sequence>
<feature type="chain" id="PRO_0000390737" description="Forkhead box protein C1-A">
    <location>
        <begin position="1"/>
        <end position="492"/>
    </location>
</feature>
<feature type="DNA-binding region" description="Fork-head" evidence="3">
    <location>
        <begin position="79"/>
        <end position="173"/>
    </location>
</feature>
<feature type="region of interest" description="Disordered" evidence="4">
    <location>
        <begin position="175"/>
        <end position="323"/>
    </location>
</feature>
<feature type="compositionally biased region" description="Basic and acidic residues" evidence="4">
    <location>
        <begin position="178"/>
        <end position="198"/>
    </location>
</feature>
<feature type="compositionally biased region" description="Low complexity" evidence="4">
    <location>
        <begin position="199"/>
        <end position="224"/>
    </location>
</feature>
<feature type="compositionally biased region" description="Polar residues" evidence="4">
    <location>
        <begin position="234"/>
        <end position="246"/>
    </location>
</feature>
<feature type="compositionally biased region" description="Low complexity" evidence="4">
    <location>
        <begin position="257"/>
        <end position="276"/>
    </location>
</feature>
<feature type="compositionally biased region" description="Polar residues" evidence="4">
    <location>
        <begin position="295"/>
        <end position="311"/>
    </location>
</feature>
<feature type="sequence conflict" description="In Ref. 1; AAC99469." evidence="9" ref="1">
    <original>H</original>
    <variation>F</variation>
    <location>
        <position position="51"/>
    </location>
</feature>
<feature type="sequence conflict" description="In Ref. 1; AAC99469." evidence="9" ref="1">
    <original>R</original>
    <variation>E</variation>
    <location>
        <position position="63"/>
    </location>
</feature>
<feature type="sequence conflict" description="In Ref. 1; AAC99469." evidence="9" ref="1">
    <original>T</original>
    <variation>A</variation>
    <location>
        <position position="69"/>
    </location>
</feature>
<feature type="sequence conflict" description="In Ref. 3; AAI69731." evidence="9" ref="3">
    <original>G</original>
    <variation>V</variation>
    <location>
        <position position="150"/>
    </location>
</feature>
<feature type="sequence conflict" description="In Ref. 1; AAC99469." evidence="9" ref="1">
    <original>P</original>
    <variation>L</variation>
    <location>
        <position position="241"/>
    </location>
</feature>
<feature type="sequence conflict" description="In Ref. 3; AAI70199." evidence="9" ref="3">
    <original>L</original>
    <variation>F</variation>
    <location>
        <position position="248"/>
    </location>
</feature>
<feature type="sequence conflict" description="In Ref. 3; AAI69731/AAI69733." evidence="9" ref="3">
    <original>G</original>
    <variation>E</variation>
    <location>
        <position position="358"/>
    </location>
</feature>
<name>FXC1A_XENLA</name>
<protein>
    <recommendedName>
        <fullName>Forkhead box protein C1-A</fullName>
        <shortName evidence="7">FoxC1</shortName>
    </recommendedName>
    <alternativeName>
        <fullName evidence="8">Fork head domain-related protein 11</fullName>
        <shortName evidence="8 12">XFD-11</shortName>
    </alternativeName>
</protein>
<accession>Q9PVZ3</accession>
<accession>B7ZQ99</accession>
<accession>B7ZQA1</accession>
<accession>B7ZRK5</accession>
<accession>Q9YHB2</accession>